<name>MPKC_ASPTN</name>
<proteinExistence type="inferred from homology"/>
<comment type="function">
    <text evidence="1">Mitogen-activated protein kinase required for growth on media where sorbitol or mannitol is the sole carbon source.</text>
</comment>
<comment type="catalytic activity">
    <reaction>
        <text>L-seryl-[protein] + ATP = O-phospho-L-seryl-[protein] + ADP + H(+)</text>
        <dbReference type="Rhea" id="RHEA:17989"/>
        <dbReference type="Rhea" id="RHEA-COMP:9863"/>
        <dbReference type="Rhea" id="RHEA-COMP:11604"/>
        <dbReference type="ChEBI" id="CHEBI:15378"/>
        <dbReference type="ChEBI" id="CHEBI:29999"/>
        <dbReference type="ChEBI" id="CHEBI:30616"/>
        <dbReference type="ChEBI" id="CHEBI:83421"/>
        <dbReference type="ChEBI" id="CHEBI:456216"/>
        <dbReference type="EC" id="2.7.11.24"/>
    </reaction>
</comment>
<comment type="catalytic activity">
    <reaction>
        <text>L-threonyl-[protein] + ATP = O-phospho-L-threonyl-[protein] + ADP + H(+)</text>
        <dbReference type="Rhea" id="RHEA:46608"/>
        <dbReference type="Rhea" id="RHEA-COMP:11060"/>
        <dbReference type="Rhea" id="RHEA-COMP:11605"/>
        <dbReference type="ChEBI" id="CHEBI:15378"/>
        <dbReference type="ChEBI" id="CHEBI:30013"/>
        <dbReference type="ChEBI" id="CHEBI:30616"/>
        <dbReference type="ChEBI" id="CHEBI:61977"/>
        <dbReference type="ChEBI" id="CHEBI:456216"/>
        <dbReference type="EC" id="2.7.11.24"/>
    </reaction>
</comment>
<comment type="cofactor">
    <cofactor evidence="1">
        <name>Mg(2+)</name>
        <dbReference type="ChEBI" id="CHEBI:18420"/>
    </cofactor>
</comment>
<comment type="activity regulation">
    <text evidence="1">Activated by tyrosine and threonine phosphorylation.</text>
</comment>
<comment type="domain">
    <text>The TXY motif contains the threonine and tyrosine residues whose phosphorylation activates the MAP kinases.</text>
</comment>
<comment type="PTM">
    <text evidence="1">Dually phosphorylated on Thr-170 and Tyr-172, which activates the enzyme.</text>
</comment>
<comment type="similarity">
    <text evidence="2">Belongs to the protein kinase superfamily. Ser/Thr protein kinase family. MAP kinase subfamily. HOG1 sub-subfamily.</text>
</comment>
<comment type="sequence caution" evidence="4">
    <conflict type="erroneous gene model prediction">
        <sequence resource="EMBL-CDS" id="EAU33101"/>
    </conflict>
</comment>
<reference key="1">
    <citation type="submission" date="2005-09" db="EMBL/GenBank/DDBJ databases">
        <title>Annotation of the Aspergillus terreus NIH2624 genome.</title>
        <authorList>
            <person name="Birren B.W."/>
            <person name="Lander E.S."/>
            <person name="Galagan J.E."/>
            <person name="Nusbaum C."/>
            <person name="Devon K."/>
            <person name="Henn M."/>
            <person name="Ma L.-J."/>
            <person name="Jaffe D.B."/>
            <person name="Butler J."/>
            <person name="Alvarez P."/>
            <person name="Gnerre S."/>
            <person name="Grabherr M."/>
            <person name="Kleber M."/>
            <person name="Mauceli E.W."/>
            <person name="Brockman W."/>
            <person name="Rounsley S."/>
            <person name="Young S.K."/>
            <person name="LaButti K."/>
            <person name="Pushparaj V."/>
            <person name="DeCaprio D."/>
            <person name="Crawford M."/>
            <person name="Koehrsen M."/>
            <person name="Engels R."/>
            <person name="Montgomery P."/>
            <person name="Pearson M."/>
            <person name="Howarth C."/>
            <person name="Larson L."/>
            <person name="Luoma S."/>
            <person name="White J."/>
            <person name="Alvarado L."/>
            <person name="Kodira C.D."/>
            <person name="Zeng Q."/>
            <person name="Oleary S."/>
            <person name="Yandava C."/>
            <person name="Denning D.W."/>
            <person name="Nierman W.C."/>
            <person name="Milne T."/>
            <person name="Madden K."/>
        </authorList>
    </citation>
    <scope>NUCLEOTIDE SEQUENCE [LARGE SCALE GENOMIC DNA]</scope>
    <source>
        <strain>NIH 2624 / FGSC A1156</strain>
    </source>
</reference>
<sequence>MDFIRSEILGTKFETTIRYANVRPVGLGAFGLVCSAYDQITQQSVAIKKMMSPFASSAIAKRTYREVKLLKKLRHENLIGLCDIFISPLEDIYLVTELLGTDLSRLLRSKPLENKFAQFFMYQLMRGLKYIHSAGVIHRDLKPSNLLINENCDLKICDFGLARVQEPRMTGYVSTRYYRAPEIMLTWQRYGVEVDIWSAGCILAEMLRGVPLFPGKDHINQFYLITDMIGNPPLEVIEKITSKNTRHIVDSLPHKEPRQLKTIFNEEDAEAVDLLEKMLLFDQSKRISAAESLEHPYLAPYHDPTDEPVAEEKFDWSFNDADLPKESWKYMIYSEVLDFHSMEAHSSGYMTQDDFASVLEFVDQNQFAET</sequence>
<protein>
    <recommendedName>
        <fullName>Mitogen-activated protein kinase mpkC</fullName>
        <shortName>MAP kinase C</shortName>
        <ecNumber>2.7.11.24</ecNumber>
    </recommendedName>
</protein>
<dbReference type="EC" id="2.7.11.24"/>
<dbReference type="EMBL" id="CH476602">
    <property type="protein sequence ID" value="EAU33101.1"/>
    <property type="status" value="ALT_SEQ"/>
    <property type="molecule type" value="Genomic_DNA"/>
</dbReference>
<dbReference type="RefSeq" id="XP_001215735.1">
    <property type="nucleotide sequence ID" value="XM_001215735.1"/>
</dbReference>
<dbReference type="SMR" id="Q0CIC7"/>
<dbReference type="STRING" id="341663.Q0CIC7"/>
<dbReference type="GeneID" id="4322342"/>
<dbReference type="eggNOG" id="KOG0660">
    <property type="taxonomic scope" value="Eukaryota"/>
</dbReference>
<dbReference type="OrthoDB" id="192887at2759"/>
<dbReference type="Proteomes" id="UP000007963">
    <property type="component" value="Unassembled WGS sequence"/>
</dbReference>
<dbReference type="GO" id="GO:0005524">
    <property type="term" value="F:ATP binding"/>
    <property type="evidence" value="ECO:0007669"/>
    <property type="project" value="UniProtKB-KW"/>
</dbReference>
<dbReference type="GO" id="GO:0004707">
    <property type="term" value="F:MAP kinase activity"/>
    <property type="evidence" value="ECO:0007669"/>
    <property type="project" value="UniProtKB-EC"/>
</dbReference>
<dbReference type="GO" id="GO:0106310">
    <property type="term" value="F:protein serine kinase activity"/>
    <property type="evidence" value="ECO:0007669"/>
    <property type="project" value="RHEA"/>
</dbReference>
<dbReference type="FunFam" id="1.10.510.10:FF:000049">
    <property type="entry name" value="Mitogen-activated protein kinase"/>
    <property type="match status" value="1"/>
</dbReference>
<dbReference type="FunFam" id="3.30.200.20:FF:000046">
    <property type="entry name" value="Mitogen-activated protein kinase"/>
    <property type="match status" value="1"/>
</dbReference>
<dbReference type="Gene3D" id="3.30.200.20">
    <property type="entry name" value="Phosphorylase Kinase, domain 1"/>
    <property type="match status" value="1"/>
</dbReference>
<dbReference type="Gene3D" id="1.10.510.10">
    <property type="entry name" value="Transferase(Phosphotransferase) domain 1"/>
    <property type="match status" value="1"/>
</dbReference>
<dbReference type="InterPro" id="IPR011009">
    <property type="entry name" value="Kinase-like_dom_sf"/>
</dbReference>
<dbReference type="InterPro" id="IPR050117">
    <property type="entry name" value="MAP_kinase"/>
</dbReference>
<dbReference type="InterPro" id="IPR003527">
    <property type="entry name" value="MAP_kinase_CS"/>
</dbReference>
<dbReference type="InterPro" id="IPR000719">
    <property type="entry name" value="Prot_kinase_dom"/>
</dbReference>
<dbReference type="InterPro" id="IPR017441">
    <property type="entry name" value="Protein_kinase_ATP_BS"/>
</dbReference>
<dbReference type="InterPro" id="IPR008271">
    <property type="entry name" value="Ser/Thr_kinase_AS"/>
</dbReference>
<dbReference type="PANTHER" id="PTHR24055">
    <property type="entry name" value="MITOGEN-ACTIVATED PROTEIN KINASE"/>
    <property type="match status" value="1"/>
</dbReference>
<dbReference type="Pfam" id="PF00069">
    <property type="entry name" value="Pkinase"/>
    <property type="match status" value="1"/>
</dbReference>
<dbReference type="SMART" id="SM00220">
    <property type="entry name" value="S_TKc"/>
    <property type="match status" value="1"/>
</dbReference>
<dbReference type="SUPFAM" id="SSF56112">
    <property type="entry name" value="Protein kinase-like (PK-like)"/>
    <property type="match status" value="1"/>
</dbReference>
<dbReference type="PROSITE" id="PS01351">
    <property type="entry name" value="MAPK"/>
    <property type="match status" value="1"/>
</dbReference>
<dbReference type="PROSITE" id="PS00107">
    <property type="entry name" value="PROTEIN_KINASE_ATP"/>
    <property type="match status" value="1"/>
</dbReference>
<dbReference type="PROSITE" id="PS50011">
    <property type="entry name" value="PROTEIN_KINASE_DOM"/>
    <property type="match status" value="1"/>
</dbReference>
<dbReference type="PROSITE" id="PS00108">
    <property type="entry name" value="PROTEIN_KINASE_ST"/>
    <property type="match status" value="1"/>
</dbReference>
<feature type="chain" id="PRO_0000289716" description="Mitogen-activated protein kinase mpkC">
    <location>
        <begin position="1"/>
        <end position="370"/>
    </location>
</feature>
<feature type="domain" description="Protein kinase" evidence="2">
    <location>
        <begin position="19"/>
        <end position="298"/>
    </location>
</feature>
<feature type="short sequence motif" description="TXY">
    <location>
        <begin position="170"/>
        <end position="172"/>
    </location>
</feature>
<feature type="active site" description="Proton acceptor" evidence="2 3">
    <location>
        <position position="140"/>
    </location>
</feature>
<feature type="binding site" evidence="2">
    <location>
        <begin position="25"/>
        <end position="33"/>
    </location>
    <ligand>
        <name>ATP</name>
        <dbReference type="ChEBI" id="CHEBI:30616"/>
    </ligand>
</feature>
<feature type="binding site" evidence="2">
    <location>
        <position position="48"/>
    </location>
    <ligand>
        <name>ATP</name>
        <dbReference type="ChEBI" id="CHEBI:30616"/>
    </ligand>
</feature>
<feature type="modified residue" description="Phosphothreonine" evidence="1">
    <location>
        <position position="170"/>
    </location>
</feature>
<feature type="modified residue" description="Phosphotyrosine" evidence="1">
    <location>
        <position position="172"/>
    </location>
</feature>
<gene>
    <name type="primary">mpkC</name>
    <name type="ORF">ATEG_06557</name>
</gene>
<accession>Q0CIC7</accession>
<keyword id="KW-0067">ATP-binding</keyword>
<keyword id="KW-0418">Kinase</keyword>
<keyword id="KW-0547">Nucleotide-binding</keyword>
<keyword id="KW-0597">Phosphoprotein</keyword>
<keyword id="KW-1185">Reference proteome</keyword>
<keyword id="KW-0723">Serine/threonine-protein kinase</keyword>
<keyword id="KW-0808">Transferase</keyword>
<evidence type="ECO:0000250" key="1"/>
<evidence type="ECO:0000255" key="2">
    <source>
        <dbReference type="PROSITE-ProRule" id="PRU00159"/>
    </source>
</evidence>
<evidence type="ECO:0000255" key="3">
    <source>
        <dbReference type="PROSITE-ProRule" id="PRU10027"/>
    </source>
</evidence>
<evidence type="ECO:0000305" key="4"/>
<organism>
    <name type="scientific">Aspergillus terreus (strain NIH 2624 / FGSC A1156)</name>
    <dbReference type="NCBI Taxonomy" id="341663"/>
    <lineage>
        <taxon>Eukaryota</taxon>
        <taxon>Fungi</taxon>
        <taxon>Dikarya</taxon>
        <taxon>Ascomycota</taxon>
        <taxon>Pezizomycotina</taxon>
        <taxon>Eurotiomycetes</taxon>
        <taxon>Eurotiomycetidae</taxon>
        <taxon>Eurotiales</taxon>
        <taxon>Aspergillaceae</taxon>
        <taxon>Aspergillus</taxon>
        <taxon>Aspergillus subgen. Circumdati</taxon>
    </lineage>
</organism>